<comment type="function">
    <text evidence="1">Modulates transcription in response to changes in cellular NADH/NAD(+) redox state.</text>
</comment>
<comment type="subunit">
    <text evidence="1">Homodimer.</text>
</comment>
<comment type="subcellular location">
    <subcellularLocation>
        <location evidence="1">Cytoplasm</location>
    </subcellularLocation>
</comment>
<comment type="similarity">
    <text evidence="1">Belongs to the transcriptional regulatory Rex family.</text>
</comment>
<organism>
    <name type="scientific">Clostridium botulinum (strain Okra / Type B1)</name>
    <dbReference type="NCBI Taxonomy" id="498213"/>
    <lineage>
        <taxon>Bacteria</taxon>
        <taxon>Bacillati</taxon>
        <taxon>Bacillota</taxon>
        <taxon>Clostridia</taxon>
        <taxon>Eubacteriales</taxon>
        <taxon>Clostridiaceae</taxon>
        <taxon>Clostridium</taxon>
    </lineage>
</organism>
<keyword id="KW-0963">Cytoplasm</keyword>
<keyword id="KW-0238">DNA-binding</keyword>
<keyword id="KW-0520">NAD</keyword>
<keyword id="KW-0678">Repressor</keyword>
<keyword id="KW-0804">Transcription</keyword>
<keyword id="KW-0805">Transcription regulation</keyword>
<accession>B1IFE2</accession>
<sequence length="210" mass="23754">MDKKKNISMAVIRRLPKYHRYLYELLKNDVDRISSKELSEKIGFTASQIRQDLNCFGDFGQQGYGYNVSELHHQISNILGLNNPYNIIIIGAGNIGQALANYTRFSKLGFNVKAMFDTNPKLIGLKIREIEILDIDYLSSYLEKNNIDIGIICVPHDNAQKVANILVKNDIKGIWNFAPIDLSVPEDVVVENVHLSDSLLTLTCLINKTE</sequence>
<feature type="chain" id="PRO_1000137323" description="Redox-sensing transcriptional repressor Rex">
    <location>
        <begin position="1"/>
        <end position="210"/>
    </location>
</feature>
<feature type="DNA-binding region" description="H-T-H motif" evidence="1">
    <location>
        <begin position="17"/>
        <end position="56"/>
    </location>
</feature>
<feature type="binding site" evidence="1">
    <location>
        <begin position="91"/>
        <end position="96"/>
    </location>
    <ligand>
        <name>NAD(+)</name>
        <dbReference type="ChEBI" id="CHEBI:57540"/>
    </ligand>
</feature>
<reference key="1">
    <citation type="journal article" date="2007" name="PLoS ONE">
        <title>Analysis of the neurotoxin complex genes in Clostridium botulinum A1-A4 and B1 strains: BoNT/A3, /Ba4 and /B1 clusters are located within plasmids.</title>
        <authorList>
            <person name="Smith T.J."/>
            <person name="Hill K.K."/>
            <person name="Foley B.T."/>
            <person name="Detter J.C."/>
            <person name="Munk A.C."/>
            <person name="Bruce D.C."/>
            <person name="Doggett N.A."/>
            <person name="Smith L.A."/>
            <person name="Marks J.D."/>
            <person name="Xie G."/>
            <person name="Brettin T.S."/>
        </authorList>
    </citation>
    <scope>NUCLEOTIDE SEQUENCE [LARGE SCALE GENOMIC DNA]</scope>
    <source>
        <strain>Okra / Type B1</strain>
    </source>
</reference>
<proteinExistence type="inferred from homology"/>
<name>REX_CLOBK</name>
<protein>
    <recommendedName>
        <fullName evidence="1">Redox-sensing transcriptional repressor Rex</fullName>
    </recommendedName>
</protein>
<evidence type="ECO:0000255" key="1">
    <source>
        <dbReference type="HAMAP-Rule" id="MF_01131"/>
    </source>
</evidence>
<dbReference type="EMBL" id="CP000939">
    <property type="protein sequence ID" value="ACA43636.1"/>
    <property type="molecule type" value="Genomic_DNA"/>
</dbReference>
<dbReference type="RefSeq" id="WP_003357537.1">
    <property type="nucleotide sequence ID" value="NC_010516.1"/>
</dbReference>
<dbReference type="SMR" id="B1IFE2"/>
<dbReference type="KEGG" id="cbb:CLD_1217"/>
<dbReference type="HOGENOM" id="CLU_061534_1_0_9"/>
<dbReference type="Proteomes" id="UP000008541">
    <property type="component" value="Chromosome"/>
</dbReference>
<dbReference type="GO" id="GO:0005737">
    <property type="term" value="C:cytoplasm"/>
    <property type="evidence" value="ECO:0007669"/>
    <property type="project" value="UniProtKB-SubCell"/>
</dbReference>
<dbReference type="GO" id="GO:0003677">
    <property type="term" value="F:DNA binding"/>
    <property type="evidence" value="ECO:0007669"/>
    <property type="project" value="UniProtKB-UniRule"/>
</dbReference>
<dbReference type="GO" id="GO:0003700">
    <property type="term" value="F:DNA-binding transcription factor activity"/>
    <property type="evidence" value="ECO:0007669"/>
    <property type="project" value="UniProtKB-UniRule"/>
</dbReference>
<dbReference type="GO" id="GO:0045892">
    <property type="term" value="P:negative regulation of DNA-templated transcription"/>
    <property type="evidence" value="ECO:0007669"/>
    <property type="project" value="InterPro"/>
</dbReference>
<dbReference type="GO" id="GO:0051775">
    <property type="term" value="P:response to redox state"/>
    <property type="evidence" value="ECO:0007669"/>
    <property type="project" value="InterPro"/>
</dbReference>
<dbReference type="Gene3D" id="3.40.50.720">
    <property type="entry name" value="NAD(P)-binding Rossmann-like Domain"/>
    <property type="match status" value="1"/>
</dbReference>
<dbReference type="Gene3D" id="1.10.10.10">
    <property type="entry name" value="Winged helix-like DNA-binding domain superfamily/Winged helix DNA-binding domain"/>
    <property type="match status" value="1"/>
</dbReference>
<dbReference type="HAMAP" id="MF_01131">
    <property type="entry name" value="Rex"/>
    <property type="match status" value="1"/>
</dbReference>
<dbReference type="InterPro" id="IPR003781">
    <property type="entry name" value="CoA-bd"/>
</dbReference>
<dbReference type="InterPro" id="IPR036291">
    <property type="entry name" value="NAD(P)-bd_dom_sf"/>
</dbReference>
<dbReference type="InterPro" id="IPR009718">
    <property type="entry name" value="Rex_DNA-bd_C_dom"/>
</dbReference>
<dbReference type="InterPro" id="IPR022876">
    <property type="entry name" value="Tscrpt_rep_Rex"/>
</dbReference>
<dbReference type="InterPro" id="IPR036388">
    <property type="entry name" value="WH-like_DNA-bd_sf"/>
</dbReference>
<dbReference type="InterPro" id="IPR036390">
    <property type="entry name" value="WH_DNA-bd_sf"/>
</dbReference>
<dbReference type="NCBIfam" id="NF003989">
    <property type="entry name" value="PRK05472.1-3"/>
    <property type="match status" value="1"/>
</dbReference>
<dbReference type="NCBIfam" id="NF003990">
    <property type="entry name" value="PRK05472.1-4"/>
    <property type="match status" value="1"/>
</dbReference>
<dbReference type="NCBIfam" id="NF003993">
    <property type="entry name" value="PRK05472.2-2"/>
    <property type="match status" value="1"/>
</dbReference>
<dbReference type="NCBIfam" id="NF003994">
    <property type="entry name" value="PRK05472.2-3"/>
    <property type="match status" value="1"/>
</dbReference>
<dbReference type="NCBIfam" id="NF003995">
    <property type="entry name" value="PRK05472.2-4"/>
    <property type="match status" value="1"/>
</dbReference>
<dbReference type="NCBIfam" id="NF003996">
    <property type="entry name" value="PRK05472.2-5"/>
    <property type="match status" value="1"/>
</dbReference>
<dbReference type="PANTHER" id="PTHR35786">
    <property type="entry name" value="REDOX-SENSING TRANSCRIPTIONAL REPRESSOR REX"/>
    <property type="match status" value="1"/>
</dbReference>
<dbReference type="PANTHER" id="PTHR35786:SF1">
    <property type="entry name" value="REDOX-SENSING TRANSCRIPTIONAL REPRESSOR REX 1"/>
    <property type="match status" value="1"/>
</dbReference>
<dbReference type="Pfam" id="PF02629">
    <property type="entry name" value="CoA_binding"/>
    <property type="match status" value="1"/>
</dbReference>
<dbReference type="Pfam" id="PF06971">
    <property type="entry name" value="Put_DNA-bind_N"/>
    <property type="match status" value="1"/>
</dbReference>
<dbReference type="SMART" id="SM00881">
    <property type="entry name" value="CoA_binding"/>
    <property type="match status" value="1"/>
</dbReference>
<dbReference type="SUPFAM" id="SSF51735">
    <property type="entry name" value="NAD(P)-binding Rossmann-fold domains"/>
    <property type="match status" value="1"/>
</dbReference>
<dbReference type="SUPFAM" id="SSF46785">
    <property type="entry name" value="Winged helix' DNA-binding domain"/>
    <property type="match status" value="1"/>
</dbReference>
<gene>
    <name evidence="1" type="primary">rex</name>
    <name type="ordered locus">CLD_1217</name>
</gene>